<accession>Q9LHP2</accession>
<accession>Q9FYA8</accession>
<protein>
    <recommendedName>
        <fullName>Serine/arginine-rich SC35-like splicing factor SCL30A</fullName>
        <shortName>At-SCL30A</shortName>
        <shortName>AtSCL30A</shortName>
    </recommendedName>
    <alternativeName>
        <fullName>SC35-like splicing factor 30A</fullName>
    </alternativeName>
    <alternativeName>
        <fullName>Serine/arginine-rich splicing factor 30A</fullName>
    </alternativeName>
</protein>
<reference key="1">
    <citation type="journal article" date="2002" name="J. Biol. Chem.">
        <title>Network of interactions of a novel plant-specific Arg/Ser-rich protein, atRSZ33, with atSC35-like splicing factors.</title>
        <authorList>
            <person name="Lopato S."/>
            <person name="Forstner C."/>
            <person name="Kalyna M."/>
            <person name="Hilscher J."/>
            <person name="Langhammer U."/>
            <person name="Korakod L."/>
            <person name="Zdravko J."/>
            <person name="Barta A."/>
        </authorList>
    </citation>
    <scope>NUCLEOTIDE SEQUENCE [MRNA]</scope>
    <scope>INTERACTION WITH RS2Z33</scope>
</reference>
<reference key="2">
    <citation type="journal article" date="2000" name="DNA Res.">
        <title>Structural analysis of Arabidopsis thaliana chromosome 3. II. Sequence features of the 4,251,695 bp regions covered by 90 P1, TAC and BAC clones.</title>
        <authorList>
            <person name="Kaneko T."/>
            <person name="Katoh T."/>
            <person name="Sato S."/>
            <person name="Nakamura Y."/>
            <person name="Asamizu E."/>
            <person name="Tabata S."/>
        </authorList>
    </citation>
    <scope>NUCLEOTIDE SEQUENCE [LARGE SCALE GENOMIC DNA]</scope>
    <source>
        <strain>cv. Columbia</strain>
    </source>
</reference>
<reference key="3">
    <citation type="journal article" date="2017" name="Plant J.">
        <title>Araport11: a complete reannotation of the Arabidopsis thaliana reference genome.</title>
        <authorList>
            <person name="Cheng C.Y."/>
            <person name="Krishnakumar V."/>
            <person name="Chan A.P."/>
            <person name="Thibaud-Nissen F."/>
            <person name="Schobel S."/>
            <person name="Town C.D."/>
        </authorList>
    </citation>
    <scope>GENOME REANNOTATION</scope>
    <source>
        <strain>cv. Columbia</strain>
    </source>
</reference>
<reference key="4">
    <citation type="journal article" date="2003" name="Science">
        <title>Empirical analysis of transcriptional activity in the Arabidopsis genome.</title>
        <authorList>
            <person name="Yamada K."/>
            <person name="Lim J."/>
            <person name="Dale J.M."/>
            <person name="Chen H."/>
            <person name="Shinn P."/>
            <person name="Palm C.J."/>
            <person name="Southwick A.M."/>
            <person name="Wu H.C."/>
            <person name="Kim C.J."/>
            <person name="Nguyen M."/>
            <person name="Pham P.K."/>
            <person name="Cheuk R.F."/>
            <person name="Karlin-Newmann G."/>
            <person name="Liu S.X."/>
            <person name="Lam B."/>
            <person name="Sakano H."/>
            <person name="Wu T."/>
            <person name="Yu G."/>
            <person name="Miranda M."/>
            <person name="Quach H.L."/>
            <person name="Tripp M."/>
            <person name="Chang C.H."/>
            <person name="Lee J.M."/>
            <person name="Toriumi M.J."/>
            <person name="Chan M.M."/>
            <person name="Tang C.C."/>
            <person name="Onodera C.S."/>
            <person name="Deng J.M."/>
            <person name="Akiyama K."/>
            <person name="Ansari Y."/>
            <person name="Arakawa T."/>
            <person name="Banh J."/>
            <person name="Banno F."/>
            <person name="Bowser L."/>
            <person name="Brooks S.Y."/>
            <person name="Carninci P."/>
            <person name="Chao Q."/>
            <person name="Choy N."/>
            <person name="Enju A."/>
            <person name="Goldsmith A.D."/>
            <person name="Gurjal M."/>
            <person name="Hansen N.F."/>
            <person name="Hayashizaki Y."/>
            <person name="Johnson-Hopson C."/>
            <person name="Hsuan V.W."/>
            <person name="Iida K."/>
            <person name="Karnes M."/>
            <person name="Khan S."/>
            <person name="Koesema E."/>
            <person name="Ishida J."/>
            <person name="Jiang P.X."/>
            <person name="Jones T."/>
            <person name="Kawai J."/>
            <person name="Kamiya A."/>
            <person name="Meyers C."/>
            <person name="Nakajima M."/>
            <person name="Narusaka M."/>
            <person name="Seki M."/>
            <person name="Sakurai T."/>
            <person name="Satou M."/>
            <person name="Tamse R."/>
            <person name="Vaysberg M."/>
            <person name="Wallender E.K."/>
            <person name="Wong C."/>
            <person name="Yamamura Y."/>
            <person name="Yuan S."/>
            <person name="Shinozaki K."/>
            <person name="Davis R.W."/>
            <person name="Theologis A."/>
            <person name="Ecker J.R."/>
        </authorList>
    </citation>
    <scope>NUCLEOTIDE SEQUENCE [LARGE SCALE MRNA]</scope>
    <source>
        <strain>cv. Columbia</strain>
    </source>
</reference>
<reference key="5">
    <citation type="journal article" date="2004" name="Mol. Biol. Cell">
        <title>Use of fluorescent protein tags to study nuclear organization of the spliceosomal machinery in transiently transformed living plant cells.</title>
        <authorList>
            <person name="Lorkovic Z.J."/>
            <person name="Hilscher J."/>
            <person name="Barta A."/>
        </authorList>
    </citation>
    <scope>SUBCELLULAR LOCATION</scope>
</reference>
<reference key="6">
    <citation type="journal article" date="2005" name="RNA">
        <title>Evolutionary conservation of minor U12-type spliceosome between plants and humans.</title>
        <authorList>
            <person name="Lorkovic Z.J."/>
            <person name="Lehner R."/>
            <person name="Forstner C."/>
            <person name="Barta A."/>
        </authorList>
    </citation>
    <scope>INTERACTION WITH SNRNP35</scope>
</reference>
<reference key="7">
    <citation type="journal article" date="2006" name="Mol. Biol. Evol.">
        <title>Survey of conserved alternative splicing events of mRNAs encoding SR proteins in land plants.</title>
        <authorList>
            <person name="Iida K."/>
            <person name="Go M."/>
        </authorList>
    </citation>
    <scope>ALTERNATIVE SPLICING</scope>
</reference>
<reference key="8">
    <citation type="journal article" date="2006" name="Nucleic Acids Res.">
        <title>Phosphoproteomics reveals extensive in vivo phosphorylation of Arabidopsis proteins involved in RNA metabolism.</title>
        <authorList>
            <person name="de la Fuente van Bentem S."/>
            <person name="Anrather D."/>
            <person name="Roitinger E."/>
            <person name="Djamei A."/>
            <person name="Hufnagl T."/>
            <person name="Barta A."/>
            <person name="Csaszar E."/>
            <person name="Dohnal I."/>
            <person name="Lecourieux D."/>
            <person name="Hirt H."/>
        </authorList>
    </citation>
    <scope>PHOSPHORYLATION [LARGE SCALE ANALYSIS] AT SER-174; SER-176 AND SER-178</scope>
    <scope>IDENTIFICATION BY MASS SPECTROMETRY [LARGE SCALE ANALYSIS]</scope>
</reference>
<reference key="9">
    <citation type="journal article" date="2006" name="RNA">
        <title>AtCyp59 is a multidomain cyclophilin from Arabidopsis thaliana that interacts with SR proteins and the C-terminal domain of the RNA polymerase II.</title>
        <authorList>
            <person name="Gullerova M."/>
            <person name="Barta A."/>
            <person name="Lorkovic Z.J."/>
        </authorList>
    </citation>
    <scope>INTERACTION WITH CYP59</scope>
</reference>
<reference key="10">
    <citation type="journal article" date="2007" name="Plant J.">
        <title>Alternative splicing of pre-mRNAs of Arabidopsis serine/arginine-rich proteins: regulation by hormones and stresses.</title>
        <authorList>
            <person name="Palusa S.G."/>
            <person name="Ali G.S."/>
            <person name="Reddy A.S."/>
        </authorList>
    </citation>
    <scope>ALTERNATIVE SPLICING</scope>
    <scope>INDUCTION</scope>
</reference>
<reference key="11">
    <citation type="journal article" date="2009" name="Plant Physiol.">
        <title>Large-scale Arabidopsis phosphoproteome profiling reveals novel chloroplast kinase substrates and phosphorylation networks.</title>
        <authorList>
            <person name="Reiland S."/>
            <person name="Messerli G."/>
            <person name="Baerenfaller K."/>
            <person name="Gerrits B."/>
            <person name="Endler A."/>
            <person name="Grossmann J."/>
            <person name="Gruissem W."/>
            <person name="Baginsky S."/>
        </authorList>
    </citation>
    <scope>PHOSPHORYLATION [LARGE SCALE ANALYSIS] AT SER-166</scope>
    <scope>IDENTIFICATION BY MASS SPECTROMETRY [LARGE SCALE ANALYSIS]</scope>
</reference>
<reference key="12">
    <citation type="journal article" date="2010" name="Plant Cell">
        <title>Implementing a rational and consistent nomenclature for serine/arginine-rich protein splicing factors (SR proteins) in plants.</title>
        <authorList>
            <person name="Barta A."/>
            <person name="Kalyna M."/>
            <person name="Reddy A.S."/>
        </authorList>
    </citation>
    <scope>GENE FAMILY</scope>
    <scope>NOMENCLATURE</scope>
</reference>
<reference key="13">
    <citation type="journal article" date="2011" name="PLoS ONE">
        <title>Comparative analysis of serine/arginine-rich proteins across 27 eukaryotes: insights into sub-family classification and extent of alternative splicing.</title>
        <authorList>
            <person name="Richardson D.N."/>
            <person name="Rogers M.F."/>
            <person name="Labadorf A."/>
            <person name="Ben-Hur A."/>
            <person name="Guo H."/>
            <person name="Paterson A.H."/>
            <person name="Reddy A.S.N."/>
        </authorList>
    </citation>
    <scope>GENE FAMILY</scope>
</reference>
<reference key="14">
    <citation type="journal article" date="2012" name="Plant J.">
        <title>Identification of an intronic splicing regulatory element involved in auto-regulation of alternative splicing of SCL33 pre-mRNA.</title>
        <authorList>
            <person name="Thomas J."/>
            <person name="Palusa S.G."/>
            <person name="Prasad K.V."/>
            <person name="Ali G.S."/>
            <person name="Surabhi G.K."/>
            <person name="Ben-Hur A."/>
            <person name="Abdel-Ghany S.E."/>
            <person name="Reddy A.S."/>
        </authorList>
    </citation>
    <scope>FUNCTION</scope>
    <scope>ALTERNATIVE SPLICING</scope>
    <scope>DISRUPTION PHENOTYPE</scope>
</reference>
<feature type="chain" id="PRO_0000429601" description="Serine/arginine-rich SC35-like splicing factor SCL30A">
    <location>
        <begin position="1"/>
        <end position="262"/>
    </location>
</feature>
<feature type="domain" description="RRM" evidence="3">
    <location>
        <begin position="37"/>
        <end position="115"/>
    </location>
</feature>
<feature type="region of interest" description="Disordered" evidence="4">
    <location>
        <begin position="1"/>
        <end position="38"/>
    </location>
</feature>
<feature type="region of interest" description="Disordered" evidence="4">
    <location>
        <begin position="115"/>
        <end position="262"/>
    </location>
</feature>
<feature type="compositionally biased region" description="Basic and acidic residues" evidence="4">
    <location>
        <begin position="115"/>
        <end position="140"/>
    </location>
</feature>
<feature type="compositionally biased region" description="Basic residues" evidence="4">
    <location>
        <begin position="150"/>
        <end position="161"/>
    </location>
</feature>
<feature type="compositionally biased region" description="Basic and acidic residues" evidence="4">
    <location>
        <begin position="180"/>
        <end position="190"/>
    </location>
</feature>
<feature type="compositionally biased region" description="Basic residues" evidence="4">
    <location>
        <begin position="209"/>
        <end position="226"/>
    </location>
</feature>
<feature type="compositionally biased region" description="Low complexity" evidence="4">
    <location>
        <begin position="234"/>
        <end position="246"/>
    </location>
</feature>
<feature type="modified residue" description="Phosphoserine" evidence="1">
    <location>
        <position position="9"/>
    </location>
</feature>
<feature type="modified residue" description="Phosphoserine" evidence="1">
    <location>
        <position position="20"/>
    </location>
</feature>
<feature type="modified residue" description="Phosphoserine" evidence="13">
    <location>
        <position position="166"/>
    </location>
</feature>
<feature type="modified residue" description="Phosphoserine" evidence="12">
    <location>
        <position position="174"/>
    </location>
</feature>
<feature type="modified residue" description="Phosphoserine" evidence="12">
    <location>
        <position position="176"/>
    </location>
</feature>
<feature type="modified residue" description="Phosphoserine" evidence="12">
    <location>
        <position position="178"/>
    </location>
</feature>
<feature type="modified residue" description="Phosphoserine" evidence="1">
    <location>
        <position position="191"/>
    </location>
</feature>
<feature type="modified residue" description="Phosphoserine" evidence="1">
    <location>
        <position position="193"/>
    </location>
</feature>
<feature type="modified residue" description="Phosphoserine" evidence="1">
    <location>
        <position position="235"/>
    </location>
</feature>
<feature type="modified residue" description="Phosphoserine" evidence="2">
    <location>
        <position position="259"/>
    </location>
</feature>
<feature type="modified residue" description="Phosphoserine" evidence="2">
    <location>
        <position position="261"/>
    </location>
</feature>
<feature type="sequence conflict" description="In Ref. 1; CAC03604." evidence="10" ref="1">
    <location>
        <position position="149"/>
    </location>
</feature>
<feature type="sequence conflict" description="In Ref. 1; CAC03604." evidence="10" ref="1">
    <original>R</original>
    <variation>C</variation>
    <location>
        <position position="162"/>
    </location>
</feature>
<organism>
    <name type="scientific">Arabidopsis thaliana</name>
    <name type="common">Mouse-ear cress</name>
    <dbReference type="NCBI Taxonomy" id="3702"/>
    <lineage>
        <taxon>Eukaryota</taxon>
        <taxon>Viridiplantae</taxon>
        <taxon>Streptophyta</taxon>
        <taxon>Embryophyta</taxon>
        <taxon>Tracheophyta</taxon>
        <taxon>Spermatophyta</taxon>
        <taxon>Magnoliopsida</taxon>
        <taxon>eudicotyledons</taxon>
        <taxon>Gunneridae</taxon>
        <taxon>Pentapetalae</taxon>
        <taxon>rosids</taxon>
        <taxon>malvids</taxon>
        <taxon>Brassicales</taxon>
        <taxon>Brassicaceae</taxon>
        <taxon>Camelineae</taxon>
        <taxon>Arabidopsis</taxon>
    </lineage>
</organism>
<keyword id="KW-0025">Alternative splicing</keyword>
<keyword id="KW-0507">mRNA processing</keyword>
<keyword id="KW-0508">mRNA splicing</keyword>
<keyword id="KW-0539">Nucleus</keyword>
<keyword id="KW-0597">Phosphoprotein</keyword>
<keyword id="KW-1185">Reference proteome</keyword>
<keyword id="KW-0694">RNA-binding</keyword>
<keyword id="KW-0747">Spliceosome</keyword>
<gene>
    <name type="primary">SCL30A</name>
    <name type="ordered locus">At3g13570</name>
    <name type="ORF">K20M4.1</name>
</gene>
<proteinExistence type="evidence at protein level"/>
<sequence>MRGRSYTPSPPRGYGRRGRSPSPRGRFGGSRDSDLPTSLLVRNLRHDCRQEDLRRPFEQFGPVKDIYLPRDYYTGDPRGFGFIQFMDPADAAEAKHQMDGYLLLGRELTVVFAEENRKKPTEMRTRDRGGRSNRFQDRRRSPPRYSRSPPPRRGRRSRSRSRGYNSPPAKRHQSRSVSPQDRRYEKERSYSRSPPHNGSRVRSGSPGRVKSHSRSPRRSVSPRKNRSYTPEQARSQSPVPRQSRSPTPVPRGAQNGDRSPSQ</sequence>
<dbReference type="EMBL" id="AJ293800">
    <property type="protein sequence ID" value="CAC03604.1"/>
    <property type="molecule type" value="mRNA"/>
</dbReference>
<dbReference type="EMBL" id="AP002038">
    <property type="protein sequence ID" value="BAB02599.1"/>
    <property type="molecule type" value="Genomic_DNA"/>
</dbReference>
<dbReference type="EMBL" id="CP002686">
    <property type="protein sequence ID" value="AEE75375.1"/>
    <property type="molecule type" value="Genomic_DNA"/>
</dbReference>
<dbReference type="EMBL" id="AF370268">
    <property type="protein sequence ID" value="AAK44083.1"/>
    <property type="molecule type" value="mRNA"/>
</dbReference>
<dbReference type="EMBL" id="AY063026">
    <property type="protein sequence ID" value="AAL34200.1"/>
    <property type="molecule type" value="mRNA"/>
</dbReference>
<dbReference type="RefSeq" id="NP_187966.1">
    <molecule id="Q9LHP2-1"/>
    <property type="nucleotide sequence ID" value="NM_112203.4"/>
</dbReference>
<dbReference type="SMR" id="Q9LHP2"/>
<dbReference type="BioGRID" id="5893">
    <property type="interactions" value="14"/>
</dbReference>
<dbReference type="FunCoup" id="Q9LHP2">
    <property type="interactions" value="3421"/>
</dbReference>
<dbReference type="IntAct" id="Q9LHP2">
    <property type="interactions" value="10"/>
</dbReference>
<dbReference type="STRING" id="3702.Q9LHP2"/>
<dbReference type="iPTMnet" id="Q9LHP2"/>
<dbReference type="PaxDb" id="3702-AT3G13570.1"/>
<dbReference type="ProteomicsDB" id="232590">
    <molecule id="Q9LHP2-1"/>
</dbReference>
<dbReference type="EnsemblPlants" id="AT3G13570.1">
    <molecule id="Q9LHP2-1"/>
    <property type="protein sequence ID" value="AT3G13570.1"/>
    <property type="gene ID" value="AT3G13570"/>
</dbReference>
<dbReference type="GeneID" id="820559"/>
<dbReference type="Gramene" id="AT3G13570.1">
    <molecule id="Q9LHP2-1"/>
    <property type="protein sequence ID" value="AT3G13570.1"/>
    <property type="gene ID" value="AT3G13570"/>
</dbReference>
<dbReference type="KEGG" id="ath:AT3G13570"/>
<dbReference type="Araport" id="AT3G13570"/>
<dbReference type="TAIR" id="AT3G13570">
    <property type="gene designation" value="SCL30A"/>
</dbReference>
<dbReference type="eggNOG" id="KOG0118">
    <property type="taxonomic scope" value="Eukaryota"/>
</dbReference>
<dbReference type="HOGENOM" id="CLU_012062_10_1_1"/>
<dbReference type="InParanoid" id="Q9LHP2"/>
<dbReference type="OMA" id="RFHDQRD"/>
<dbReference type="PhylomeDB" id="Q9LHP2"/>
<dbReference type="PRO" id="PR:Q9LHP2"/>
<dbReference type="Proteomes" id="UP000006548">
    <property type="component" value="Chromosome 3"/>
</dbReference>
<dbReference type="ExpressionAtlas" id="Q9LHP2">
    <property type="expression patterns" value="baseline and differential"/>
</dbReference>
<dbReference type="GO" id="GO:0005829">
    <property type="term" value="C:cytosol"/>
    <property type="evidence" value="ECO:0007005"/>
    <property type="project" value="TAIR"/>
</dbReference>
<dbReference type="GO" id="GO:0016607">
    <property type="term" value="C:nuclear speck"/>
    <property type="evidence" value="ECO:0000314"/>
    <property type="project" value="TAIR"/>
</dbReference>
<dbReference type="GO" id="GO:0005681">
    <property type="term" value="C:spliceosomal complex"/>
    <property type="evidence" value="ECO:0007669"/>
    <property type="project" value="UniProtKB-KW"/>
</dbReference>
<dbReference type="GO" id="GO:0003729">
    <property type="term" value="F:mRNA binding"/>
    <property type="evidence" value="ECO:0000314"/>
    <property type="project" value="TAIR"/>
</dbReference>
<dbReference type="GO" id="GO:0000398">
    <property type="term" value="P:mRNA splicing, via spliceosome"/>
    <property type="evidence" value="ECO:0000316"/>
    <property type="project" value="TAIR"/>
</dbReference>
<dbReference type="GO" id="GO:0008380">
    <property type="term" value="P:RNA splicing"/>
    <property type="evidence" value="ECO:0000303"/>
    <property type="project" value="TAIR"/>
</dbReference>
<dbReference type="FunFam" id="3.30.70.330:FF:000784">
    <property type="entry name" value="Serine/arginine-rich SC35-like splicing factor SCL30A"/>
    <property type="match status" value="1"/>
</dbReference>
<dbReference type="Gene3D" id="3.30.70.330">
    <property type="match status" value="1"/>
</dbReference>
<dbReference type="InterPro" id="IPR012677">
    <property type="entry name" value="Nucleotide-bd_a/b_plait_sf"/>
</dbReference>
<dbReference type="InterPro" id="IPR035979">
    <property type="entry name" value="RBD_domain_sf"/>
</dbReference>
<dbReference type="InterPro" id="IPR000504">
    <property type="entry name" value="RRM_dom"/>
</dbReference>
<dbReference type="InterPro" id="IPR050907">
    <property type="entry name" value="SRSF"/>
</dbReference>
<dbReference type="PANTHER" id="PTHR23147">
    <property type="entry name" value="SERINE/ARGININE RICH SPLICING FACTOR"/>
    <property type="match status" value="1"/>
</dbReference>
<dbReference type="Pfam" id="PF00076">
    <property type="entry name" value="RRM_1"/>
    <property type="match status" value="1"/>
</dbReference>
<dbReference type="SMART" id="SM00360">
    <property type="entry name" value="RRM"/>
    <property type="match status" value="1"/>
</dbReference>
<dbReference type="SUPFAM" id="SSF54928">
    <property type="entry name" value="RNA-binding domain, RBD"/>
    <property type="match status" value="1"/>
</dbReference>
<dbReference type="PROSITE" id="PS50102">
    <property type="entry name" value="RRM"/>
    <property type="match status" value="1"/>
</dbReference>
<comment type="function">
    <text evidence="9">Involved in intron recognition and spliceosome assembly. Binds probably to multiple 5'-GAAG-3' repeats found in its third intron, suggesting autoregulation of alternative splicing (PubMed:22913769). May be necessary for accurate splicing of the 3' region of introns.</text>
</comment>
<comment type="subunit">
    <text evidence="5 7 8">Component of the spliceosome. Interacts with SNRNP35, CYP59 and RS2Z33.</text>
</comment>
<comment type="interaction">
    <interactant intactId="EBI-927082">
        <id>Q9LHP2</id>
    </interactant>
    <interactant intactId="EBI-927052">
        <id>Q1PDV2</id>
        <label>SCL28</label>
    </interactant>
    <organismsDiffer>false</organismsDiffer>
    <experiments>2</experiments>
</comment>
<comment type="interaction">
    <interactant intactId="EBI-927082">
        <id>Q9LHP2</id>
    </interactant>
    <interactant intactId="EBI-927061">
        <id>Q8L3X8</id>
        <label>SCL30</label>
    </interactant>
    <organismsDiffer>false</organismsDiffer>
    <experiments>3</experiments>
</comment>
<comment type="subcellular location">
    <subcellularLocation>
        <location evidence="6">Nucleus speckle</location>
    </subcellularLocation>
</comment>
<comment type="alternative products">
    <event type="alternative splicing"/>
    <isoform>
        <id>Q9LHP2-1</id>
        <name>1</name>
        <sequence type="displayed"/>
    </isoform>
    <text>A number of isoforms are produced. According to EST sequences.</text>
</comment>
<comment type="disruption phenotype">
    <text evidence="9">No effect on alternative splicing, due to the redundancy with SCL33. Scl33 and scl30a double mutant shows altered splicing.</text>
</comment>
<comment type="miscellaneous">
    <text evidence="11">The splicing pattern of the pre-mRNA is regulated in a tissue-specific manner and by development, and changes in response to various types of abiotic stresses.</text>
</comment>
<comment type="similarity">
    <text evidence="10">Belongs to the splicing factor SR family. SCL subfamily.</text>
</comment>
<name>SL30A_ARATH</name>
<evidence type="ECO:0000250" key="1">
    <source>
        <dbReference type="UniProtKB" id="Q8L3X8"/>
    </source>
</evidence>
<evidence type="ECO:0000250" key="2">
    <source>
        <dbReference type="UniProtKB" id="Q9FMG4"/>
    </source>
</evidence>
<evidence type="ECO:0000255" key="3">
    <source>
        <dbReference type="PROSITE-ProRule" id="PRU00176"/>
    </source>
</evidence>
<evidence type="ECO:0000256" key="4">
    <source>
        <dbReference type="SAM" id="MobiDB-lite"/>
    </source>
</evidence>
<evidence type="ECO:0000269" key="5">
    <source>
    </source>
</evidence>
<evidence type="ECO:0000269" key="6">
    <source>
    </source>
</evidence>
<evidence type="ECO:0000269" key="7">
    <source>
    </source>
</evidence>
<evidence type="ECO:0000269" key="8">
    <source>
    </source>
</evidence>
<evidence type="ECO:0000269" key="9">
    <source>
    </source>
</evidence>
<evidence type="ECO:0000305" key="10"/>
<evidence type="ECO:0000305" key="11">
    <source>
    </source>
</evidence>
<evidence type="ECO:0007744" key="12">
    <source>
    </source>
</evidence>
<evidence type="ECO:0007744" key="13">
    <source>
    </source>
</evidence>